<name>AMPN_FELCA</name>
<keyword id="KW-0002">3D-structure</keyword>
<keyword id="KW-0031">Aminopeptidase</keyword>
<keyword id="KW-0037">Angiogenesis</keyword>
<keyword id="KW-1003">Cell membrane</keyword>
<keyword id="KW-0217">Developmental protein</keyword>
<keyword id="KW-0221">Differentiation</keyword>
<keyword id="KW-1015">Disulfide bond</keyword>
<keyword id="KW-0325">Glycoprotein</keyword>
<keyword id="KW-1183">Host cell receptor for virus entry</keyword>
<keyword id="KW-0945">Host-virus interaction</keyword>
<keyword id="KW-0378">Hydrolase</keyword>
<keyword id="KW-0472">Membrane</keyword>
<keyword id="KW-0479">Metal-binding</keyword>
<keyword id="KW-0482">Metalloprotease</keyword>
<keyword id="KW-0645">Protease</keyword>
<keyword id="KW-0675">Receptor</keyword>
<keyword id="KW-1185">Reference proteome</keyword>
<keyword id="KW-0735">Signal-anchor</keyword>
<keyword id="KW-0765">Sulfation</keyword>
<keyword id="KW-0812">Transmembrane</keyword>
<keyword id="KW-1133">Transmembrane helix</keyword>
<keyword id="KW-0862">Zinc</keyword>
<proteinExistence type="evidence at protein level"/>
<dbReference type="EC" id="3.4.11.2" evidence="1"/>
<dbReference type="EMBL" id="U58920">
    <property type="protein sequence ID" value="AAC48686.1"/>
    <property type="molecule type" value="mRNA"/>
</dbReference>
<dbReference type="EMBL" id="U96104">
    <property type="protein sequence ID" value="AAD09272.1"/>
    <property type="molecule type" value="mRNA"/>
</dbReference>
<dbReference type="RefSeq" id="NP_001009252.2">
    <property type="nucleotide sequence ID" value="NM_001009252.2"/>
</dbReference>
<dbReference type="PDB" id="8JKT">
    <property type="method" value="X-ray"/>
    <property type="resolution" value="1.90 A"/>
    <property type="chains" value="A/B/C/D=1-967"/>
</dbReference>
<dbReference type="PDBsum" id="8JKT"/>
<dbReference type="SMR" id="P79171"/>
<dbReference type="FunCoup" id="P79171">
    <property type="interactions" value="43"/>
</dbReference>
<dbReference type="STRING" id="9685.ENSFCAP00000049104"/>
<dbReference type="MEROPS" id="M01.001"/>
<dbReference type="GlyCosmos" id="P79171">
    <property type="glycosylation" value="8 sites, No reported glycans"/>
</dbReference>
<dbReference type="PaxDb" id="9685-ENSFCAP00000008319"/>
<dbReference type="GeneID" id="493785"/>
<dbReference type="KEGG" id="fca:493785"/>
<dbReference type="CTD" id="290"/>
<dbReference type="eggNOG" id="KOG1046">
    <property type="taxonomic scope" value="Eukaryota"/>
</dbReference>
<dbReference type="InParanoid" id="P79171"/>
<dbReference type="OrthoDB" id="510539at2759"/>
<dbReference type="Proteomes" id="UP000011712">
    <property type="component" value="Unplaced"/>
</dbReference>
<dbReference type="GO" id="GO:0005737">
    <property type="term" value="C:cytoplasm"/>
    <property type="evidence" value="ECO:0000318"/>
    <property type="project" value="GO_Central"/>
</dbReference>
<dbReference type="GO" id="GO:0005615">
    <property type="term" value="C:extracellular space"/>
    <property type="evidence" value="ECO:0000318"/>
    <property type="project" value="GO_Central"/>
</dbReference>
<dbReference type="GO" id="GO:0005886">
    <property type="term" value="C:plasma membrane"/>
    <property type="evidence" value="ECO:0000250"/>
    <property type="project" value="UniProtKB"/>
</dbReference>
<dbReference type="GO" id="GO:0016285">
    <property type="term" value="F:alanyl aminopeptidase activity"/>
    <property type="evidence" value="ECO:0007669"/>
    <property type="project" value="UniProtKB-EC"/>
</dbReference>
<dbReference type="GO" id="GO:0070006">
    <property type="term" value="F:metalloaminopeptidase activity"/>
    <property type="evidence" value="ECO:0000318"/>
    <property type="project" value="GO_Central"/>
</dbReference>
<dbReference type="GO" id="GO:0042277">
    <property type="term" value="F:peptide binding"/>
    <property type="evidence" value="ECO:0000318"/>
    <property type="project" value="GO_Central"/>
</dbReference>
<dbReference type="GO" id="GO:0001618">
    <property type="term" value="F:virus receptor activity"/>
    <property type="evidence" value="ECO:0007669"/>
    <property type="project" value="UniProtKB-KW"/>
</dbReference>
<dbReference type="GO" id="GO:0008270">
    <property type="term" value="F:zinc ion binding"/>
    <property type="evidence" value="ECO:0000318"/>
    <property type="project" value="GO_Central"/>
</dbReference>
<dbReference type="GO" id="GO:0001525">
    <property type="term" value="P:angiogenesis"/>
    <property type="evidence" value="ECO:0007669"/>
    <property type="project" value="UniProtKB-KW"/>
</dbReference>
<dbReference type="GO" id="GO:0030154">
    <property type="term" value="P:cell differentiation"/>
    <property type="evidence" value="ECO:0007669"/>
    <property type="project" value="UniProtKB-KW"/>
</dbReference>
<dbReference type="GO" id="GO:0043171">
    <property type="term" value="P:peptide catabolic process"/>
    <property type="evidence" value="ECO:0000318"/>
    <property type="project" value="GO_Central"/>
</dbReference>
<dbReference type="GO" id="GO:0006508">
    <property type="term" value="P:proteolysis"/>
    <property type="evidence" value="ECO:0000318"/>
    <property type="project" value="GO_Central"/>
</dbReference>
<dbReference type="CDD" id="cd09601">
    <property type="entry name" value="M1_APN-Q_like"/>
    <property type="match status" value="1"/>
</dbReference>
<dbReference type="FunFam" id="2.60.40.1910:FF:000005">
    <property type="entry name" value="Aminopeptidase"/>
    <property type="match status" value="1"/>
</dbReference>
<dbReference type="FunFam" id="1.25.50.20:FF:000012">
    <property type="entry name" value="Aminopeptidase N"/>
    <property type="match status" value="1"/>
</dbReference>
<dbReference type="FunFam" id="2.60.40.1730:FF:000012">
    <property type="entry name" value="Aminopeptidase N"/>
    <property type="match status" value="1"/>
</dbReference>
<dbReference type="FunFam" id="1.10.390.10:FF:000016">
    <property type="entry name" value="Glutamyl aminopeptidase"/>
    <property type="match status" value="1"/>
</dbReference>
<dbReference type="Gene3D" id="1.25.50.20">
    <property type="match status" value="1"/>
</dbReference>
<dbReference type="Gene3D" id="2.60.40.1910">
    <property type="match status" value="1"/>
</dbReference>
<dbReference type="Gene3D" id="1.10.390.10">
    <property type="entry name" value="Neutral Protease Domain 2"/>
    <property type="match status" value="1"/>
</dbReference>
<dbReference type="Gene3D" id="2.60.40.1730">
    <property type="entry name" value="tricorn interacting facor f3 domain"/>
    <property type="match status" value="1"/>
</dbReference>
<dbReference type="InterPro" id="IPR045357">
    <property type="entry name" value="Aminopeptidase_N-like_N"/>
</dbReference>
<dbReference type="InterPro" id="IPR042097">
    <property type="entry name" value="Aminopeptidase_N-like_N_sf"/>
</dbReference>
<dbReference type="InterPro" id="IPR024571">
    <property type="entry name" value="ERAP1-like_C_dom"/>
</dbReference>
<dbReference type="InterPro" id="IPR034016">
    <property type="entry name" value="M1_APN-typ"/>
</dbReference>
<dbReference type="InterPro" id="IPR001930">
    <property type="entry name" value="Peptidase_M1"/>
</dbReference>
<dbReference type="InterPro" id="IPR050344">
    <property type="entry name" value="Peptidase_M1_aminopeptidases"/>
</dbReference>
<dbReference type="InterPro" id="IPR014782">
    <property type="entry name" value="Peptidase_M1_dom"/>
</dbReference>
<dbReference type="InterPro" id="IPR027268">
    <property type="entry name" value="Peptidase_M4/M1_CTD_sf"/>
</dbReference>
<dbReference type="PANTHER" id="PTHR11533:SF172">
    <property type="entry name" value="AMINOPEPTIDASE N"/>
    <property type="match status" value="1"/>
</dbReference>
<dbReference type="PANTHER" id="PTHR11533">
    <property type="entry name" value="PROTEASE M1 ZINC METALLOPROTEASE"/>
    <property type="match status" value="1"/>
</dbReference>
<dbReference type="Pfam" id="PF11838">
    <property type="entry name" value="ERAP1_C"/>
    <property type="match status" value="1"/>
</dbReference>
<dbReference type="Pfam" id="PF01433">
    <property type="entry name" value="Peptidase_M1"/>
    <property type="match status" value="1"/>
</dbReference>
<dbReference type="Pfam" id="PF17900">
    <property type="entry name" value="Peptidase_M1_N"/>
    <property type="match status" value="1"/>
</dbReference>
<dbReference type="PRINTS" id="PR00756">
    <property type="entry name" value="ALADIPTASE"/>
</dbReference>
<dbReference type="SUPFAM" id="SSF63737">
    <property type="entry name" value="Leukotriene A4 hydrolase N-terminal domain"/>
    <property type="match status" value="1"/>
</dbReference>
<dbReference type="SUPFAM" id="SSF55486">
    <property type="entry name" value="Metalloproteases ('zincins'), catalytic domain"/>
    <property type="match status" value="1"/>
</dbReference>
<dbReference type="PROSITE" id="PS00142">
    <property type="entry name" value="ZINC_PROTEASE"/>
    <property type="match status" value="1"/>
</dbReference>
<evidence type="ECO:0000250" key="1">
    <source>
        <dbReference type="UniProtKB" id="P15144"/>
    </source>
</evidence>
<evidence type="ECO:0000250" key="2">
    <source>
        <dbReference type="UniProtKB" id="P15145"/>
    </source>
</evidence>
<evidence type="ECO:0000250" key="3">
    <source>
        <dbReference type="UniProtKB" id="P97449"/>
    </source>
</evidence>
<evidence type="ECO:0000255" key="4"/>
<evidence type="ECO:0000255" key="5">
    <source>
        <dbReference type="PROSITE-ProRule" id="PRU10095"/>
    </source>
</evidence>
<evidence type="ECO:0000256" key="6">
    <source>
        <dbReference type="SAM" id="MobiDB-lite"/>
    </source>
</evidence>
<evidence type="ECO:0000269" key="7">
    <source>
    </source>
</evidence>
<evidence type="ECO:0000269" key="8">
    <source>
    </source>
</evidence>
<evidence type="ECO:0000269" key="9">
    <source>
    </source>
</evidence>
<evidence type="ECO:0000269" key="10">
    <source>
    </source>
</evidence>
<evidence type="ECO:0000305" key="11"/>
<evidence type="ECO:0000305" key="12">
    <source>
    </source>
</evidence>
<evidence type="ECO:0007829" key="13">
    <source>
        <dbReference type="PDB" id="8JKT"/>
    </source>
</evidence>
<organism>
    <name type="scientific">Felis catus</name>
    <name type="common">Cat</name>
    <name type="synonym">Felis silvestris catus</name>
    <dbReference type="NCBI Taxonomy" id="9685"/>
    <lineage>
        <taxon>Eukaryota</taxon>
        <taxon>Metazoa</taxon>
        <taxon>Chordata</taxon>
        <taxon>Craniata</taxon>
        <taxon>Vertebrata</taxon>
        <taxon>Euteleostomi</taxon>
        <taxon>Mammalia</taxon>
        <taxon>Eutheria</taxon>
        <taxon>Laurasiatheria</taxon>
        <taxon>Carnivora</taxon>
        <taxon>Feliformia</taxon>
        <taxon>Felidae</taxon>
        <taxon>Felinae</taxon>
        <taxon>Felis</taxon>
    </lineage>
</organism>
<protein>
    <recommendedName>
        <fullName evidence="11">Aminopeptidase N</fullName>
        <shortName>AP-N</shortName>
        <shortName>fAPN</shortName>
        <ecNumber evidence="1">3.4.11.2</ecNumber>
    </recommendedName>
    <alternativeName>
        <fullName>Alanyl aminopeptidase</fullName>
    </alternativeName>
    <alternativeName>
        <fullName>Aminopeptidase M</fullName>
        <shortName>AP-M</shortName>
    </alternativeName>
    <alternativeName>
        <fullName>Microsomal aminopeptidase</fullName>
    </alternativeName>
    <cdAntigenName>CD13</cdAntigenName>
</protein>
<reference key="1">
    <citation type="journal article" date="1996" name="J. Virol.">
        <title>Feline aminopeptidase N serves as a receptor for feline, canine, porcine, and human coronaviruses in serogroup I.</title>
        <authorList>
            <person name="Tresnan D.B."/>
            <person name="Levis R."/>
            <person name="Holmes K.V."/>
        </authorList>
    </citation>
    <scope>NUCLEOTIDE SEQUENCE [MRNA]</scope>
    <scope>INTERACTION WITH FCOV SPIKE GLYCOPROTEIN (MICROBIAL INFECTION)</scope>
    <scope>CHARACTERIZATION OF CORONAVIRUS RECEPTOR FUNCTION (MICROBIAL INFECTION)</scope>
    <scope>SUBCELLULAR LOCATION</scope>
</reference>
<reference key="2">
    <citation type="journal article" date="1998" name="Adv. Exp. Med. Biol.">
        <title>Molecular analysis of the coronavirus-receptor function of aminopeptidase N.</title>
        <authorList>
            <person name="Kolb A.F."/>
            <person name="Hegyi A."/>
            <person name="Maile J."/>
            <person name="Heister A."/>
            <person name="Hagemann M."/>
            <person name="Siddell S.G."/>
        </authorList>
    </citation>
    <scope>NUCLEOTIDE SEQUENCE [MRNA]</scope>
    <scope>IDENTIFICATION OF RECEPTOR FUNCTIONAL DOMAINS FOR FIPV INFECTION (MICROBIAL INFECTION)</scope>
    <scope>TOPOLOGY</scope>
</reference>
<reference key="3">
    <citation type="journal article" date="1998" name="J. Gen. Virol.">
        <title>Characterization of determinants involved in the feline infectious peritonitis virus receptor function of feline aminopeptidase N.</title>
        <authorList>
            <person name="Hegyi A."/>
            <person name="Kolb A.F."/>
        </authorList>
    </citation>
    <scope>IDENTIFICATION OF RECEPTOR FUNCTIONAL DOMAINS FOR FIPV; TGEV AND HCV-229E INFECTION (MICROBIAL INFECTION)</scope>
    <scope>TOPOLOGY</scope>
</reference>
<reference key="4">
    <citation type="journal article" date="2002" name="Arch. Virol.">
        <title>The role of feline aminopeptidase N as a receptor for infectious bronchitis virus.</title>
        <authorList>
            <person name="Miguel B."/>
            <person name="Pharr G.T."/>
            <person name="Wang C."/>
        </authorList>
    </citation>
    <scope>CHARACTERIZATION OF IBV RECEPTOR FUNCTION (MICROBIAL INFECTION)</scope>
    <scope>SUBCELLULAR LOCATION</scope>
</reference>
<feature type="chain" id="PRO_0000095080" description="Aminopeptidase N">
    <location>
        <begin position="1"/>
        <end position="967"/>
    </location>
</feature>
<feature type="topological domain" description="Cytoplasmic" evidence="12">
    <location>
        <begin position="1"/>
        <end position="8"/>
    </location>
</feature>
<feature type="transmembrane region" description="Helical; Signal-anchor for type II membrane protein" evidence="4">
    <location>
        <begin position="9"/>
        <end position="32"/>
    </location>
</feature>
<feature type="topological domain" description="Extracellular" evidence="9 10">
    <location>
        <begin position="33"/>
        <end position="967"/>
    </location>
</feature>
<feature type="region of interest" description="Cytosolic Ser/Thr-rich junction">
    <location>
        <begin position="33"/>
        <end position="66"/>
    </location>
</feature>
<feature type="region of interest" description="Disordered" evidence="6">
    <location>
        <begin position="41"/>
        <end position="61"/>
    </location>
</feature>
<feature type="region of interest" description="Metalloprotease">
    <location>
        <begin position="67"/>
        <end position="967"/>
    </location>
</feature>
<feature type="region of interest" description="Interaction with FCoV and TGEV spike glycoprotein" evidence="9 10">
    <location>
        <begin position="670"/>
        <end position="840"/>
    </location>
</feature>
<feature type="active site" description="Proton acceptor" evidence="5">
    <location>
        <position position="388"/>
    </location>
</feature>
<feature type="binding site" evidence="1">
    <location>
        <begin position="351"/>
        <end position="355"/>
    </location>
    <ligand>
        <name>substrate</name>
    </ligand>
</feature>
<feature type="binding site" evidence="5">
    <location>
        <position position="387"/>
    </location>
    <ligand>
        <name>Zn(2+)</name>
        <dbReference type="ChEBI" id="CHEBI:29105"/>
        <note>catalytic</note>
    </ligand>
</feature>
<feature type="binding site" evidence="5">
    <location>
        <position position="391"/>
    </location>
    <ligand>
        <name>Zn(2+)</name>
        <dbReference type="ChEBI" id="CHEBI:29105"/>
        <note>catalytic</note>
    </ligand>
</feature>
<feature type="binding site" evidence="5">
    <location>
        <position position="410"/>
    </location>
    <ligand>
        <name>Zn(2+)</name>
        <dbReference type="ChEBI" id="CHEBI:29105"/>
        <note>catalytic</note>
    </ligand>
</feature>
<feature type="site" description="Transition state stabilizer" evidence="1">
    <location>
        <position position="476"/>
    </location>
</feature>
<feature type="modified residue" description="Sulfotyrosine" evidence="4">
    <location>
        <position position="175"/>
    </location>
</feature>
<feature type="modified residue" description="Sulfotyrosine" evidence="4">
    <location>
        <position position="418"/>
    </location>
</feature>
<feature type="glycosylation site" description="N-linked (GlcNAc...) asparagine" evidence="4">
    <location>
        <position position="38"/>
    </location>
</feature>
<feature type="glycosylation site" description="N-linked (GlcNAc...) asparagine" evidence="4">
    <location>
        <position position="84"/>
    </location>
</feature>
<feature type="glycosylation site" description="N-linked (GlcNAc...) asparagine" evidence="4">
    <location>
        <position position="126"/>
    </location>
</feature>
<feature type="glycosylation site" description="N-linked (GlcNAc...) asparagine" evidence="4">
    <location>
        <position position="233"/>
    </location>
</feature>
<feature type="glycosylation site" description="N-linked (GlcNAc...) asparagine" evidence="4">
    <location>
        <position position="338"/>
    </location>
</feature>
<feature type="glycosylation site" description="N-linked (GlcNAc...) asparagine" evidence="4">
    <location>
        <position position="626"/>
    </location>
</feature>
<feature type="glycosylation site" description="N-linked (GlcNAc...) asparagine" evidence="4">
    <location>
        <position position="682"/>
    </location>
</feature>
<feature type="glycosylation site" description="N-linked (GlcNAc...) asparagine" evidence="4">
    <location>
        <position position="740"/>
    </location>
</feature>
<feature type="disulfide bond" evidence="1">
    <location>
        <begin position="762"/>
        <end position="769"/>
    </location>
</feature>
<feature type="disulfide bond" evidence="1">
    <location>
        <begin position="799"/>
        <end position="835"/>
    </location>
</feature>
<feature type="sequence conflict" description="In Ref. 2; AAD09272." evidence="11" ref="2">
    <original>N</original>
    <variation>S</variation>
    <location>
        <position position="105"/>
    </location>
</feature>
<feature type="sequence conflict" description="In Ref. 2; AAD09272." evidence="11" ref="2">
    <original>H</original>
    <variation>Q</variation>
    <location>
        <position position="144"/>
    </location>
</feature>
<feature type="sequence conflict" description="In Ref. 2; AAD09272." evidence="11" ref="2">
    <original>N</original>
    <variation>K</variation>
    <location>
        <position position="178"/>
    </location>
</feature>
<feature type="sequence conflict" description="In Ref. 2; AAD09272." evidence="11" ref="2">
    <original>E</original>
    <variation>D</variation>
    <location>
        <position position="215"/>
    </location>
</feature>
<feature type="sequence conflict" description="In Ref. 2; AAD09272." evidence="11" ref="2">
    <original>I</original>
    <variation>T</variation>
    <location>
        <position position="236"/>
    </location>
</feature>
<feature type="sequence conflict" description="In Ref. 2; AAD09272." evidence="11" ref="2">
    <location>
        <position position="258"/>
    </location>
</feature>
<feature type="sequence conflict" description="In Ref. 2; AAD09272." evidence="11" ref="2">
    <original>N</original>
    <variation>K</variation>
    <location>
        <position position="581"/>
    </location>
</feature>
<feature type="sequence conflict" description="In Ref. 2; AAD09272." evidence="11" ref="2">
    <original>S</original>
    <variation>N</variation>
    <location>
        <position position="593"/>
    </location>
</feature>
<feature type="sequence conflict" description="In Ref. 2; AAD09272." evidence="11" ref="2">
    <original>L</original>
    <variation>V</variation>
    <location>
        <position position="623"/>
    </location>
</feature>
<feature type="sequence conflict" description="In Ref. 2; AAD09272." evidence="11" ref="2">
    <original>L</original>
    <variation>S</variation>
    <location>
        <position position="730"/>
    </location>
</feature>
<feature type="sequence conflict" description="In Ref. 2; AAD09272." evidence="11" ref="2">
    <original>ERV</original>
    <variation>RKS</variation>
    <location>
        <begin position="735"/>
        <end position="737"/>
    </location>
</feature>
<feature type="sequence conflict" description="In Ref. 2; AAD09272." evidence="11" ref="2">
    <original>T</original>
    <variation>A</variation>
    <location>
        <position position="747"/>
    </location>
</feature>
<feature type="sequence conflict" description="In Ref. 2; AAD09272." evidence="11" ref="2">
    <original>L</original>
    <variation>F</variation>
    <location>
        <position position="829"/>
    </location>
</feature>
<feature type="sequence conflict" description="In Ref. 2; AAD09272." evidence="11" ref="2">
    <original>L</original>
    <variation>I</variation>
    <location>
        <position position="949"/>
    </location>
</feature>
<feature type="sequence conflict" description="In Ref. 2; AAD09272." evidence="11" ref="2">
    <original>S</original>
    <variation>SK</variation>
    <location>
        <position position="967"/>
    </location>
</feature>
<feature type="helix" evidence="13">
    <location>
        <begin position="68"/>
        <end position="70"/>
    </location>
</feature>
<feature type="strand" evidence="13">
    <location>
        <begin position="71"/>
        <end position="73"/>
    </location>
</feature>
<feature type="strand" evidence="13">
    <location>
        <begin position="76"/>
        <end position="89"/>
    </location>
</feature>
<feature type="strand" evidence="13">
    <location>
        <begin position="100"/>
        <end position="113"/>
    </location>
</feature>
<feature type="strand" evidence="13">
    <location>
        <begin position="116"/>
        <end position="121"/>
    </location>
</feature>
<feature type="strand" evidence="13">
    <location>
        <begin position="130"/>
        <end position="139"/>
    </location>
</feature>
<feature type="strand" evidence="13">
    <location>
        <begin position="149"/>
        <end position="155"/>
    </location>
</feature>
<feature type="turn" evidence="13">
    <location>
        <begin position="156"/>
        <end position="159"/>
    </location>
</feature>
<feature type="strand" evidence="13">
    <location>
        <begin position="160"/>
        <end position="167"/>
    </location>
</feature>
<feature type="strand" evidence="13">
    <location>
        <begin position="174"/>
        <end position="184"/>
    </location>
</feature>
<feature type="strand" evidence="13">
    <location>
        <begin position="187"/>
        <end position="199"/>
    </location>
</feature>
<feature type="strand" evidence="13">
    <location>
        <begin position="202"/>
        <end position="210"/>
    </location>
</feature>
<feature type="turn" evidence="13">
    <location>
        <begin position="212"/>
        <end position="215"/>
    </location>
</feature>
<feature type="helix" evidence="13">
    <location>
        <begin position="216"/>
        <end position="218"/>
    </location>
</feature>
<feature type="strand" evidence="13">
    <location>
        <begin position="230"/>
        <end position="239"/>
    </location>
</feature>
<feature type="strand" evidence="13">
    <location>
        <begin position="242"/>
        <end position="248"/>
    </location>
</feature>
<feature type="strand" evidence="13">
    <location>
        <begin position="250"/>
        <end position="252"/>
    </location>
</feature>
<feature type="strand" evidence="13">
    <location>
        <begin position="255"/>
        <end position="257"/>
    </location>
</feature>
<feature type="strand" evidence="13">
    <location>
        <begin position="260"/>
        <end position="268"/>
    </location>
</feature>
<feature type="helix" evidence="13">
    <location>
        <begin position="276"/>
        <end position="278"/>
    </location>
</feature>
<feature type="strand" evidence="13">
    <location>
        <begin position="281"/>
        <end position="284"/>
    </location>
</feature>
<feature type="strand" evidence="13">
    <location>
        <begin position="287"/>
        <end position="292"/>
    </location>
</feature>
<feature type="strand" evidence="13">
    <location>
        <begin position="298"/>
        <end position="303"/>
    </location>
</feature>
<feature type="helix" evidence="13">
    <location>
        <begin position="305"/>
        <end position="309"/>
    </location>
</feature>
<feature type="turn" evidence="13">
    <location>
        <begin position="310"/>
        <end position="313"/>
    </location>
</feature>
<feature type="helix" evidence="13">
    <location>
        <begin position="314"/>
        <end position="330"/>
    </location>
</feature>
<feature type="strand" evidence="13">
    <location>
        <begin position="337"/>
        <end position="347"/>
    </location>
</feature>
<feature type="strand" evidence="13">
    <location>
        <begin position="349"/>
        <end position="353"/>
    </location>
</feature>
<feature type="strand" evidence="13">
    <location>
        <begin position="358"/>
        <end position="362"/>
    </location>
</feature>
<feature type="helix" evidence="13">
    <location>
        <begin position="363"/>
        <end position="366"/>
    </location>
</feature>
<feature type="turn" evidence="13">
    <location>
        <begin position="370"/>
        <end position="372"/>
    </location>
</feature>
<feature type="helix" evidence="13">
    <location>
        <begin position="375"/>
        <end position="393"/>
    </location>
</feature>
<feature type="turn" evidence="13">
    <location>
        <begin position="395"/>
        <end position="397"/>
    </location>
</feature>
<feature type="strand" evidence="13">
    <location>
        <begin position="398"/>
        <end position="402"/>
    </location>
</feature>
<feature type="helix" evidence="13">
    <location>
        <begin position="403"/>
        <end position="406"/>
    </location>
</feature>
<feature type="helix" evidence="13">
    <location>
        <begin position="407"/>
        <end position="424"/>
    </location>
</feature>
<feature type="helix" evidence="13">
    <location>
        <begin position="426"/>
        <end position="428"/>
    </location>
</feature>
<feature type="helix" evidence="13">
    <location>
        <begin position="430"/>
        <end position="433"/>
    </location>
</feature>
<feature type="helix" evidence="13">
    <location>
        <begin position="434"/>
        <end position="437"/>
    </location>
</feature>
<feature type="helix" evidence="13">
    <location>
        <begin position="439"/>
        <end position="446"/>
    </location>
</feature>
<feature type="helix" evidence="13">
    <location>
        <begin position="458"/>
        <end position="460"/>
    </location>
</feature>
<feature type="helix" evidence="13">
    <location>
        <begin position="464"/>
        <end position="469"/>
    </location>
</feature>
<feature type="helix" evidence="13">
    <location>
        <begin position="473"/>
        <end position="490"/>
    </location>
</feature>
<feature type="helix" evidence="13">
    <location>
        <begin position="492"/>
        <end position="506"/>
    </location>
</feature>
<feature type="strand" evidence="13">
    <location>
        <begin position="509"/>
        <end position="511"/>
    </location>
</feature>
<feature type="helix" evidence="13">
    <location>
        <begin position="515"/>
        <end position="525"/>
    </location>
</feature>
<feature type="helix" evidence="13">
    <location>
        <begin position="536"/>
        <end position="544"/>
    </location>
</feature>
<feature type="strand" evidence="13">
    <location>
        <begin position="550"/>
        <end position="554"/>
    </location>
</feature>
<feature type="turn" evidence="13">
    <location>
        <begin position="556"/>
        <end position="558"/>
    </location>
</feature>
<feature type="strand" evidence="13">
    <location>
        <begin position="560"/>
        <end position="565"/>
    </location>
</feature>
<feature type="turn" evidence="13">
    <location>
        <begin position="579"/>
        <end position="582"/>
    </location>
</feature>
<feature type="strand" evidence="13">
    <location>
        <begin position="586"/>
        <end position="588"/>
    </location>
</feature>
<feature type="strand" evidence="13">
    <location>
        <begin position="590"/>
        <end position="592"/>
    </location>
</feature>
<feature type="strand" evidence="13">
    <location>
        <begin position="600"/>
        <end position="602"/>
    </location>
</feature>
<feature type="strand" evidence="13">
    <location>
        <begin position="606"/>
        <end position="609"/>
    </location>
</feature>
<feature type="helix" evidence="13">
    <location>
        <begin position="611"/>
        <end position="613"/>
    </location>
</feature>
<feature type="strand" evidence="13">
    <location>
        <begin position="621"/>
        <end position="624"/>
    </location>
</feature>
<feature type="helix" evidence="13">
    <location>
        <begin position="625"/>
        <end position="627"/>
    </location>
</feature>
<feature type="strand" evidence="13">
    <location>
        <begin position="629"/>
        <end position="635"/>
    </location>
</feature>
<feature type="helix" evidence="13">
    <location>
        <begin position="637"/>
        <end position="650"/>
    </location>
</feature>
<feature type="helix" evidence="13">
    <location>
        <begin position="651"/>
        <end position="653"/>
    </location>
</feature>
<feature type="helix" evidence="13">
    <location>
        <begin position="656"/>
        <end position="671"/>
    </location>
</feature>
<feature type="helix" evidence="13">
    <location>
        <begin position="677"/>
        <end position="682"/>
    </location>
</feature>
<feature type="helix" evidence="13">
    <location>
        <begin position="683"/>
        <end position="689"/>
    </location>
</feature>
<feature type="helix" evidence="13">
    <location>
        <begin position="693"/>
        <end position="710"/>
    </location>
</feature>
<feature type="helix" evidence="13">
    <location>
        <begin position="716"/>
        <end position="737"/>
    </location>
</feature>
<feature type="turn" evidence="13">
    <location>
        <begin position="738"/>
        <end position="742"/>
    </location>
</feature>
<feature type="helix" evidence="13">
    <location>
        <begin position="748"/>
        <end position="763"/>
    </location>
</feature>
<feature type="helix" evidence="13">
    <location>
        <begin position="767"/>
        <end position="782"/>
    </location>
</feature>
<feature type="helix" evidence="13">
    <location>
        <begin position="791"/>
        <end position="804"/>
    </location>
</feature>
<feature type="helix" evidence="13">
    <location>
        <begin position="807"/>
        <end position="818"/>
    </location>
</feature>
<feature type="helix" evidence="13">
    <location>
        <begin position="823"/>
        <end position="832"/>
    </location>
</feature>
<feature type="helix" evidence="13">
    <location>
        <begin position="833"/>
        <end position="835"/>
    </location>
</feature>
<feature type="helix" evidence="13">
    <location>
        <begin position="839"/>
        <end position="848"/>
    </location>
</feature>
<feature type="turn" evidence="13">
    <location>
        <begin position="852"/>
        <end position="854"/>
    </location>
</feature>
<feature type="helix" evidence="13">
    <location>
        <begin position="857"/>
        <end position="859"/>
    </location>
</feature>
<feature type="helix" evidence="13">
    <location>
        <begin position="860"/>
        <end position="869"/>
    </location>
</feature>
<feature type="helix" evidence="13">
    <location>
        <begin position="873"/>
        <end position="883"/>
    </location>
</feature>
<feature type="helix" evidence="13">
    <location>
        <begin position="885"/>
        <end position="892"/>
    </location>
</feature>
<feature type="strand" evidence="13">
    <location>
        <begin position="895"/>
        <end position="897"/>
    </location>
</feature>
<feature type="helix" evidence="13">
    <location>
        <begin position="898"/>
        <end position="907"/>
    </location>
</feature>
<feature type="helix" evidence="13">
    <location>
        <begin position="913"/>
        <end position="925"/>
    </location>
</feature>
<feature type="turn" evidence="13">
    <location>
        <begin position="926"/>
        <end position="929"/>
    </location>
</feature>
<feature type="helix" evidence="13">
    <location>
        <begin position="932"/>
        <end position="934"/>
    </location>
</feature>
<feature type="helix" evidence="13">
    <location>
        <begin position="935"/>
        <end position="965"/>
    </location>
</feature>
<comment type="function">
    <text evidence="1 3">Broad specificity aminopeptidase which plays a role in the final digestion of peptides generated from hydrolysis of proteins by gastric and pancreatic proteases. Also involved in the processing of various peptides including peptide hormones, such as angiotensin III and IV, neuropeptides, and chemokines. May also be involved the cleavage of peptides bound to major histocompatibility complex class II molecules of antigen presenting cells. May have a role in angiogenesis and promote cholesterol crystallization. May have a role in amino acid transport by acting as binding partner of amino acid transporter SLC6A19 and regulating its activity (By similarity).</text>
</comment>
<comment type="function">
    <text evidence="7 8 9">(Microbial infection) In case of feline coronavirus (FCoV) infection, serves as a receptor for FCoV spike glycoprotein. It is as well a receptor for other serogroup I coronaviruses, like canine coronavirus (CCoV), porcine transmissible gastroenteritis virus (TGEV), and human coronavirus 229E (HCoV-229E). Also serves as a receptor for infectious bronchitis virus (IBV, Arkansas 99 serotype) in serogroup III.</text>
</comment>
<comment type="catalytic activity">
    <reaction evidence="1">
        <text>Release of an N-terminal amino acid, Xaa-|-Yaa- from a peptide, amide or arylamide. Xaa is preferably Ala, but may be most amino acids including Pro (slow action). When a terminal hydrophobic residue is followed by a prolyl residue, the two may be released as an intact Xaa-Pro dipeptide.</text>
        <dbReference type="EC" id="3.4.11.2"/>
    </reaction>
</comment>
<comment type="cofactor">
    <cofactor evidence="1">
        <name>Zn(2+)</name>
        <dbReference type="ChEBI" id="CHEBI:29105"/>
    </cofactor>
    <text evidence="1">Binds 1 zinc ion per subunit.</text>
</comment>
<comment type="subunit">
    <text evidence="1 3">Homodimer. Interacts with SLC6A19 (By similarity).</text>
</comment>
<comment type="subunit">
    <text evidence="8 9">(Microbial infection) Interacts with FCoV, CCoV, TGEV and HCoV-229E spike glycoprotein.</text>
</comment>
<comment type="subcellular location">
    <subcellularLocation>
        <location evidence="7 8">Cell membrane</location>
        <topology evidence="9 10">Single-pass type II membrane protein</topology>
    </subcellularLocation>
    <text evidence="1">Also found as a soluble form.</text>
</comment>
<comment type="PTM">
    <text evidence="2">Sulfated.</text>
</comment>
<comment type="PTM">
    <text evidence="1">N- and O-glycosylated.</text>
</comment>
<comment type="PTM">
    <text evidence="1">May undergo proteolysis and give rise to a soluble form.</text>
</comment>
<comment type="similarity">
    <text evidence="11">Belongs to the peptidase M1 family.</text>
</comment>
<sequence length="967" mass="109424">MAKGFYISKPVGILAILLGVAAVCTIIALSVVYSQEKNRSTESSTAASTAAPTGPTTTVATTLDQSKPWNVYRLPKTLIPDSYNVTLRPYLTPNNKGLYVFTGTNIVRFTCKESTNIVIIHSKRLNYTSHQGHMVALSGVGGFHPQPVIVRTELVELTEYLVVHLQEPLVAGRQYEMNSEFQGELADDLAGFYRSEYMENGVKKVLATTHMQATEARKSFPCFDEPAMKATFNITIIHPNNLVALSNMLPRGPSVPFGEDPTWKVTEFETTPIMSTYLLAYIVSEFSYVETRAPSGVLIRIWARPSAINQGHGDYALKVTGPILDFFSQHYDTPYPLNKSDQIALPDFNAGAMENWGLVTYRESALLYDRQSSSSGNQERVVTVIAHELAHQWFGNLVTLEWWNDLWLNEGFASYVEYLGADFAEPTWNLKDLMVLNDVYRVMAVDALASSHPLSTPASEINTPAQISEVFDSISYSKGASVLRMLSNFLTEDLFKMGIASYLHTYKYGNTIYLNLWEHLQQVVDKQPTIKLPDTVSAIMDRWILQMGFPVITVDTQTGTISQQHFLLDPQSVVTRPSQFNYLWIVPISSVRSGSPQAHYWLPGVEKAQNDLFKTTANDWVLLNLNVTGYYLVNYDNENWKKIQTQLQTDLSVIPVINRAQVIHDAFNLASAQKVPVTLALNNTLFLIQETEYMPWQAALSSLSYFKLMFDRSEVYGPMKRYLKKQVTPLFNHFERVTKNWTDHPQTLMDQYSEINAVSTACSYGVPECEKLAATLFAQWKKNPQNNPIHPNLRSTVYCNAIAQGGEEEWNFVWEQFLKAELVNEADKLRGALACSNQVWILNRFLSYTLDPNLIRKQDVTSTLSSISSNVVGQTLVWDFVQSNWKKLFQDYGTGSFSFSNLIQAVTRRFSTEFELQQLEQFKKNNMDTGFGSATRALEQALEKTKANLKWVKENKDVVLRWFTENS</sequence>
<gene>
    <name type="primary">ANPEP</name>
    <name type="synonym">APN</name>
</gene>
<accession>P79171</accession>
<accession>O97783</accession>